<organism>
    <name type="scientific">Clostridium botulinum (strain Okra / Type B1)</name>
    <dbReference type="NCBI Taxonomy" id="498213"/>
    <lineage>
        <taxon>Bacteria</taxon>
        <taxon>Bacillati</taxon>
        <taxon>Bacillota</taxon>
        <taxon>Clostridia</taxon>
        <taxon>Eubacteriales</taxon>
        <taxon>Clostridiaceae</taxon>
        <taxon>Clostridium</taxon>
    </lineage>
</organism>
<gene>
    <name evidence="1" type="primary">purM</name>
    <name type="ordered locus">CLD_1665</name>
</gene>
<dbReference type="EC" id="6.3.3.1" evidence="1"/>
<dbReference type="EMBL" id="CP000939">
    <property type="protein sequence ID" value="ACA45540.1"/>
    <property type="molecule type" value="Genomic_DNA"/>
</dbReference>
<dbReference type="RefSeq" id="WP_003403054.1">
    <property type="nucleotide sequence ID" value="NC_010516.1"/>
</dbReference>
<dbReference type="SMR" id="B1IL59"/>
<dbReference type="KEGG" id="cbb:CLD_1665"/>
<dbReference type="HOGENOM" id="CLU_047116_0_0_9"/>
<dbReference type="UniPathway" id="UPA00074">
    <property type="reaction ID" value="UER00129"/>
</dbReference>
<dbReference type="Proteomes" id="UP000008541">
    <property type="component" value="Chromosome"/>
</dbReference>
<dbReference type="GO" id="GO:0005829">
    <property type="term" value="C:cytosol"/>
    <property type="evidence" value="ECO:0007669"/>
    <property type="project" value="TreeGrafter"/>
</dbReference>
<dbReference type="GO" id="GO:0005524">
    <property type="term" value="F:ATP binding"/>
    <property type="evidence" value="ECO:0007669"/>
    <property type="project" value="UniProtKB-KW"/>
</dbReference>
<dbReference type="GO" id="GO:0004637">
    <property type="term" value="F:phosphoribosylamine-glycine ligase activity"/>
    <property type="evidence" value="ECO:0007669"/>
    <property type="project" value="TreeGrafter"/>
</dbReference>
<dbReference type="GO" id="GO:0004641">
    <property type="term" value="F:phosphoribosylformylglycinamidine cyclo-ligase activity"/>
    <property type="evidence" value="ECO:0007669"/>
    <property type="project" value="UniProtKB-UniRule"/>
</dbReference>
<dbReference type="GO" id="GO:0006189">
    <property type="term" value="P:'de novo' IMP biosynthetic process"/>
    <property type="evidence" value="ECO:0007669"/>
    <property type="project" value="UniProtKB-UniRule"/>
</dbReference>
<dbReference type="GO" id="GO:0046084">
    <property type="term" value="P:adenine biosynthetic process"/>
    <property type="evidence" value="ECO:0007669"/>
    <property type="project" value="TreeGrafter"/>
</dbReference>
<dbReference type="CDD" id="cd02196">
    <property type="entry name" value="PurM"/>
    <property type="match status" value="1"/>
</dbReference>
<dbReference type="FunFam" id="3.30.1330.10:FF:000001">
    <property type="entry name" value="Phosphoribosylformylglycinamidine cyclo-ligase"/>
    <property type="match status" value="1"/>
</dbReference>
<dbReference type="FunFam" id="3.90.650.10:FF:000011">
    <property type="entry name" value="Phosphoribosylformylglycinamidine cyclo-ligase"/>
    <property type="match status" value="1"/>
</dbReference>
<dbReference type="Gene3D" id="3.90.650.10">
    <property type="entry name" value="PurM-like C-terminal domain"/>
    <property type="match status" value="1"/>
</dbReference>
<dbReference type="Gene3D" id="3.30.1330.10">
    <property type="entry name" value="PurM-like, N-terminal domain"/>
    <property type="match status" value="1"/>
</dbReference>
<dbReference type="HAMAP" id="MF_00741">
    <property type="entry name" value="AIRS"/>
    <property type="match status" value="1"/>
</dbReference>
<dbReference type="InterPro" id="IPR010918">
    <property type="entry name" value="PurM-like_C_dom"/>
</dbReference>
<dbReference type="InterPro" id="IPR036676">
    <property type="entry name" value="PurM-like_C_sf"/>
</dbReference>
<dbReference type="InterPro" id="IPR016188">
    <property type="entry name" value="PurM-like_N"/>
</dbReference>
<dbReference type="InterPro" id="IPR036921">
    <property type="entry name" value="PurM-like_N_sf"/>
</dbReference>
<dbReference type="InterPro" id="IPR004733">
    <property type="entry name" value="PurM_cligase"/>
</dbReference>
<dbReference type="NCBIfam" id="TIGR00878">
    <property type="entry name" value="purM"/>
    <property type="match status" value="1"/>
</dbReference>
<dbReference type="PANTHER" id="PTHR10520:SF12">
    <property type="entry name" value="TRIFUNCTIONAL PURINE BIOSYNTHETIC PROTEIN ADENOSINE-3"/>
    <property type="match status" value="1"/>
</dbReference>
<dbReference type="PANTHER" id="PTHR10520">
    <property type="entry name" value="TRIFUNCTIONAL PURINE BIOSYNTHETIC PROTEIN ADENOSINE-3-RELATED"/>
    <property type="match status" value="1"/>
</dbReference>
<dbReference type="Pfam" id="PF00586">
    <property type="entry name" value="AIRS"/>
    <property type="match status" value="1"/>
</dbReference>
<dbReference type="Pfam" id="PF02769">
    <property type="entry name" value="AIRS_C"/>
    <property type="match status" value="1"/>
</dbReference>
<dbReference type="SUPFAM" id="SSF56042">
    <property type="entry name" value="PurM C-terminal domain-like"/>
    <property type="match status" value="1"/>
</dbReference>
<dbReference type="SUPFAM" id="SSF55326">
    <property type="entry name" value="PurM N-terminal domain-like"/>
    <property type="match status" value="1"/>
</dbReference>
<accession>B1IL59</accession>
<sequence>MVSYKEAGVNIEEGYKSVDLIKKHASKTFTKGVLNNLGSFAGMFELPKYKNPVLVSGTDGVGTKLDIAFRMKKYNTVGIDCVAMCVNDILCHGAKPLFFLDYIACGKLESEIAAQLVEGVSNGCIQSECALIGGETAEMPGFYRDGEYDIAGFAVGIAEKDEIIDGSKIEDGDILIGIASSGPHSNGYSLIRKLVEDLHKDFEGNKIGNTLLTPTKIYVKPVMKLLEKYNIKGMAHVTGGGFYENIPRMFKEDFTAVINKKSYPLPNIFSHLMSLGIEEDHMYNTFNMGIGFVLCVNEKDGENIIKDLIEMGEKGYKIGYVKKGDKSVELI</sequence>
<reference key="1">
    <citation type="journal article" date="2007" name="PLoS ONE">
        <title>Analysis of the neurotoxin complex genes in Clostridium botulinum A1-A4 and B1 strains: BoNT/A3, /Ba4 and /B1 clusters are located within plasmids.</title>
        <authorList>
            <person name="Smith T.J."/>
            <person name="Hill K.K."/>
            <person name="Foley B.T."/>
            <person name="Detter J.C."/>
            <person name="Munk A.C."/>
            <person name="Bruce D.C."/>
            <person name="Doggett N.A."/>
            <person name="Smith L.A."/>
            <person name="Marks J.D."/>
            <person name="Xie G."/>
            <person name="Brettin T.S."/>
        </authorList>
    </citation>
    <scope>NUCLEOTIDE SEQUENCE [LARGE SCALE GENOMIC DNA]</scope>
    <source>
        <strain>Okra / Type B1</strain>
    </source>
</reference>
<evidence type="ECO:0000255" key="1">
    <source>
        <dbReference type="HAMAP-Rule" id="MF_00741"/>
    </source>
</evidence>
<feature type="chain" id="PRO_1000193008" description="Phosphoribosylformylglycinamidine cyclo-ligase">
    <location>
        <begin position="1"/>
        <end position="331"/>
    </location>
</feature>
<name>PUR5_CLOBK</name>
<keyword id="KW-0067">ATP-binding</keyword>
<keyword id="KW-0963">Cytoplasm</keyword>
<keyword id="KW-0436">Ligase</keyword>
<keyword id="KW-0547">Nucleotide-binding</keyword>
<keyword id="KW-0658">Purine biosynthesis</keyword>
<comment type="catalytic activity">
    <reaction evidence="1">
        <text>2-formamido-N(1)-(5-O-phospho-beta-D-ribosyl)acetamidine + ATP = 5-amino-1-(5-phospho-beta-D-ribosyl)imidazole + ADP + phosphate + H(+)</text>
        <dbReference type="Rhea" id="RHEA:23032"/>
        <dbReference type="ChEBI" id="CHEBI:15378"/>
        <dbReference type="ChEBI" id="CHEBI:30616"/>
        <dbReference type="ChEBI" id="CHEBI:43474"/>
        <dbReference type="ChEBI" id="CHEBI:137981"/>
        <dbReference type="ChEBI" id="CHEBI:147287"/>
        <dbReference type="ChEBI" id="CHEBI:456216"/>
        <dbReference type="EC" id="6.3.3.1"/>
    </reaction>
</comment>
<comment type="pathway">
    <text evidence="1">Purine metabolism; IMP biosynthesis via de novo pathway; 5-amino-1-(5-phospho-D-ribosyl)imidazole from N(2)-formyl-N(1)-(5-phospho-D-ribosyl)glycinamide: step 2/2.</text>
</comment>
<comment type="subcellular location">
    <subcellularLocation>
        <location evidence="1">Cytoplasm</location>
    </subcellularLocation>
</comment>
<comment type="similarity">
    <text evidence="1">Belongs to the AIR synthase family.</text>
</comment>
<proteinExistence type="inferred from homology"/>
<protein>
    <recommendedName>
        <fullName evidence="1">Phosphoribosylformylglycinamidine cyclo-ligase</fullName>
        <ecNumber evidence="1">6.3.3.1</ecNumber>
    </recommendedName>
    <alternativeName>
        <fullName evidence="1">AIR synthase</fullName>
    </alternativeName>
    <alternativeName>
        <fullName evidence="1">AIRS</fullName>
    </alternativeName>
    <alternativeName>
        <fullName evidence="1">Phosphoribosyl-aminoimidazole synthetase</fullName>
    </alternativeName>
</protein>